<accession>Q29606</accession>
<name>RNAS1_ORYLE</name>
<sequence length="75" mass="8367">ASTSNYCNQMMKSRNLTQNRCKPVNTFVHESLADVQAVCSQKNVACKNGQTNCYQSYSTMSITDCRETGSSKYPN</sequence>
<feature type="chain" id="PRO_0000057209" description="Ribonuclease pancreatic">
    <location>
        <begin position="1" status="less than"/>
        <end position="75" status="greater than"/>
    </location>
</feature>
<feature type="binding site" evidence="1">
    <location>
        <begin position="22"/>
        <end position="26"/>
    </location>
    <ligand>
        <name>substrate</name>
    </ligand>
</feature>
<feature type="binding site" evidence="1">
    <location>
        <position position="47"/>
    </location>
    <ligand>
        <name>substrate</name>
    </ligand>
</feature>
<feature type="binding site" evidence="1">
    <location>
        <position position="66"/>
    </location>
    <ligand>
        <name>substrate</name>
    </ligand>
</feature>
<feature type="glycosylation site" description="N-linked (GlcNAc...) asparagine" evidence="2">
    <location>
        <position position="15"/>
    </location>
</feature>
<feature type="disulfide bond" evidence="1">
    <location>
        <begin position="7"/>
        <end position="65"/>
    </location>
</feature>
<feature type="disulfide bond" evidence="1">
    <location>
        <begin position="46"/>
        <end position="53"/>
    </location>
</feature>
<feature type="non-terminal residue">
    <location>
        <position position="1"/>
    </location>
</feature>
<feature type="non-terminal residue">
    <location>
        <position position="75"/>
    </location>
</feature>
<dbReference type="EC" id="4.6.1.18"/>
<dbReference type="EMBL" id="S81527">
    <property type="protein sequence ID" value="AAB39845.1"/>
    <property type="molecule type" value="Genomic_DNA"/>
</dbReference>
<dbReference type="SMR" id="Q29606"/>
<dbReference type="GlyCosmos" id="Q29606">
    <property type="glycosylation" value="1 site, No reported glycans"/>
</dbReference>
<dbReference type="GO" id="GO:0005576">
    <property type="term" value="C:extracellular region"/>
    <property type="evidence" value="ECO:0007669"/>
    <property type="project" value="UniProtKB-SubCell"/>
</dbReference>
<dbReference type="GO" id="GO:0016829">
    <property type="term" value="F:lyase activity"/>
    <property type="evidence" value="ECO:0007669"/>
    <property type="project" value="UniProtKB-KW"/>
</dbReference>
<dbReference type="GO" id="GO:0003676">
    <property type="term" value="F:nucleic acid binding"/>
    <property type="evidence" value="ECO:0007669"/>
    <property type="project" value="InterPro"/>
</dbReference>
<dbReference type="GO" id="GO:0004522">
    <property type="term" value="F:ribonuclease A activity"/>
    <property type="evidence" value="ECO:0007669"/>
    <property type="project" value="UniProtKB-EC"/>
</dbReference>
<dbReference type="GO" id="GO:0050830">
    <property type="term" value="P:defense response to Gram-positive bacterium"/>
    <property type="evidence" value="ECO:0007669"/>
    <property type="project" value="TreeGrafter"/>
</dbReference>
<dbReference type="CDD" id="cd06265">
    <property type="entry name" value="RNase_A_canonical"/>
    <property type="match status" value="1"/>
</dbReference>
<dbReference type="Gene3D" id="3.10.130.10">
    <property type="entry name" value="Ribonuclease A-like domain"/>
    <property type="match status" value="1"/>
</dbReference>
<dbReference type="InterPro" id="IPR001427">
    <property type="entry name" value="RNaseA"/>
</dbReference>
<dbReference type="InterPro" id="IPR036816">
    <property type="entry name" value="RNaseA-like_dom_sf"/>
</dbReference>
<dbReference type="InterPro" id="IPR023411">
    <property type="entry name" value="RNaseA_AS"/>
</dbReference>
<dbReference type="InterPro" id="IPR023412">
    <property type="entry name" value="RNaseA_domain"/>
</dbReference>
<dbReference type="PANTHER" id="PTHR11437">
    <property type="entry name" value="RIBONUCLEASE"/>
    <property type="match status" value="1"/>
</dbReference>
<dbReference type="PANTHER" id="PTHR11437:SF24">
    <property type="entry name" value="RIBONUCLEASE PANCREATIC"/>
    <property type="match status" value="1"/>
</dbReference>
<dbReference type="Pfam" id="PF00074">
    <property type="entry name" value="RnaseA"/>
    <property type="match status" value="1"/>
</dbReference>
<dbReference type="PRINTS" id="PR00794">
    <property type="entry name" value="RIBONUCLEASE"/>
</dbReference>
<dbReference type="SMART" id="SM00092">
    <property type="entry name" value="RNAse_Pc"/>
    <property type="match status" value="1"/>
</dbReference>
<dbReference type="SUPFAM" id="SSF54076">
    <property type="entry name" value="RNase A-like"/>
    <property type="match status" value="1"/>
</dbReference>
<dbReference type="PROSITE" id="PS00127">
    <property type="entry name" value="RNASE_PANCREATIC"/>
    <property type="match status" value="1"/>
</dbReference>
<organism>
    <name type="scientific">Oryx leucoryx</name>
    <name type="common">Arabian oryx</name>
    <dbReference type="NCBI Taxonomy" id="39411"/>
    <lineage>
        <taxon>Eukaryota</taxon>
        <taxon>Metazoa</taxon>
        <taxon>Chordata</taxon>
        <taxon>Craniata</taxon>
        <taxon>Vertebrata</taxon>
        <taxon>Euteleostomi</taxon>
        <taxon>Mammalia</taxon>
        <taxon>Eutheria</taxon>
        <taxon>Laurasiatheria</taxon>
        <taxon>Artiodactyla</taxon>
        <taxon>Ruminantia</taxon>
        <taxon>Pecora</taxon>
        <taxon>Bovidae</taxon>
        <taxon>Hippotraginae</taxon>
        <taxon>Oryx</taxon>
    </lineage>
</organism>
<gene>
    <name type="primary">rnase1</name>
    <name type="synonym">rns1</name>
</gene>
<reference key="1">
    <citation type="journal article" date="1996" name="FEBS Lett.">
        <title>Pseudogenes in ribonuclease evolution: a source of new biomacromolecular function?</title>
        <authorList>
            <person name="Trabesinger-Ruef N."/>
            <person name="Jermann T."/>
            <person name="Zankel T."/>
            <person name="Durrant B."/>
            <person name="Frank G."/>
            <person name="Benner S.A."/>
        </authorList>
    </citation>
    <scope>NUCLEOTIDE SEQUENCE [GENOMIC DNA]</scope>
</reference>
<comment type="function">
    <text evidence="1">Endonuclease that catalyzes the cleavage of RNA on the 3' side of pyrimidine nucleotides. Acts on single-stranded and double-stranded RNA (By similarity).</text>
</comment>
<comment type="catalytic activity">
    <reaction>
        <text>an [RNA] containing cytidine + H2O = an [RNA]-3'-cytidine-3'-phosphate + a 5'-hydroxy-ribonucleotide-3'-[RNA].</text>
        <dbReference type="EC" id="4.6.1.18"/>
    </reaction>
</comment>
<comment type="catalytic activity">
    <reaction>
        <text>an [RNA] containing uridine + H2O = an [RNA]-3'-uridine-3'-phosphate + a 5'-hydroxy-ribonucleotide-3'-[RNA].</text>
        <dbReference type="EC" id="4.6.1.18"/>
    </reaction>
</comment>
<comment type="subunit">
    <text evidence="1">Monomer. Interacts with and forms tight 1:1 complexes with RNH1. Dimerization of two such complexes may occur. Interaction with RNH1 inhibits this protein (By similarity).</text>
</comment>
<comment type="subcellular location">
    <subcellularLocation>
        <location>Secreted</location>
    </subcellularLocation>
</comment>
<comment type="tissue specificity">
    <text>Pancreas.</text>
</comment>
<comment type="similarity">
    <text evidence="3">Belongs to the pancreatic ribonuclease family.</text>
</comment>
<keyword id="KW-1015">Disulfide bond</keyword>
<keyword id="KW-0255">Endonuclease</keyword>
<keyword id="KW-0325">Glycoprotein</keyword>
<keyword id="KW-0378">Hydrolase</keyword>
<keyword id="KW-0456">Lyase</keyword>
<keyword id="KW-0540">Nuclease</keyword>
<keyword id="KW-0964">Secreted</keyword>
<proteinExistence type="evidence at transcript level"/>
<protein>
    <recommendedName>
        <fullName>Ribonuclease pancreatic</fullName>
        <ecNumber>4.6.1.18</ecNumber>
    </recommendedName>
    <alternativeName>
        <fullName>RNase 1</fullName>
    </alternativeName>
    <alternativeName>
        <fullName>RNase A</fullName>
    </alternativeName>
</protein>
<evidence type="ECO:0000250" key="1"/>
<evidence type="ECO:0000255" key="2"/>
<evidence type="ECO:0000305" key="3"/>